<dbReference type="EMBL" id="FM242711">
    <property type="protein sequence ID" value="CAS05054.1"/>
    <property type="molecule type" value="Genomic_DNA"/>
</dbReference>
<dbReference type="RefSeq" id="WP_003726695.1">
    <property type="nucleotide sequence ID" value="NC_012488.1"/>
</dbReference>
<dbReference type="SMR" id="C1L2I8"/>
<dbReference type="GeneID" id="93239154"/>
<dbReference type="KEGG" id="lmc:Lm4b_01290"/>
<dbReference type="HOGENOM" id="CLU_089581_0_0_9"/>
<dbReference type="PHI-base" id="PHI:3344"/>
<dbReference type="GO" id="GO:0005737">
    <property type="term" value="C:cytoplasm"/>
    <property type="evidence" value="ECO:0007669"/>
    <property type="project" value="UniProtKB-SubCell"/>
</dbReference>
<dbReference type="GO" id="GO:0003677">
    <property type="term" value="F:DNA binding"/>
    <property type="evidence" value="ECO:0007669"/>
    <property type="project" value="UniProtKB-UniRule"/>
</dbReference>
<dbReference type="GO" id="GO:0003700">
    <property type="term" value="F:DNA-binding transcription factor activity"/>
    <property type="evidence" value="ECO:0007669"/>
    <property type="project" value="InterPro"/>
</dbReference>
<dbReference type="GO" id="GO:0005525">
    <property type="term" value="F:GTP binding"/>
    <property type="evidence" value="ECO:0007669"/>
    <property type="project" value="InterPro"/>
</dbReference>
<dbReference type="GO" id="GO:0045892">
    <property type="term" value="P:negative regulation of DNA-templated transcription"/>
    <property type="evidence" value="ECO:0007669"/>
    <property type="project" value="UniProtKB-UniRule"/>
</dbReference>
<dbReference type="FunFam" id="1.10.10.10:FF:000034">
    <property type="entry name" value="GTP-sensing transcriptional pleiotropic repressor CodY"/>
    <property type="match status" value="1"/>
</dbReference>
<dbReference type="FunFam" id="3.30.450.40:FF:000003">
    <property type="entry name" value="GTP-sensing transcriptional pleiotropic repressor CodY"/>
    <property type="match status" value="1"/>
</dbReference>
<dbReference type="Gene3D" id="3.30.450.40">
    <property type="match status" value="1"/>
</dbReference>
<dbReference type="Gene3D" id="1.10.10.10">
    <property type="entry name" value="Winged helix-like DNA-binding domain superfamily/Winged helix DNA-binding domain"/>
    <property type="match status" value="1"/>
</dbReference>
<dbReference type="HAMAP" id="MF_00621">
    <property type="entry name" value="HTH_type_CodY"/>
    <property type="match status" value="1"/>
</dbReference>
<dbReference type="InterPro" id="IPR014154">
    <property type="entry name" value="CodY"/>
</dbReference>
<dbReference type="InterPro" id="IPR029016">
    <property type="entry name" value="GAF-like_dom_sf"/>
</dbReference>
<dbReference type="InterPro" id="IPR013198">
    <property type="entry name" value="GTP_trans_reg_CodY_C"/>
</dbReference>
<dbReference type="InterPro" id="IPR010312">
    <property type="entry name" value="Transc_reg_CodY_N"/>
</dbReference>
<dbReference type="InterPro" id="IPR036388">
    <property type="entry name" value="WH-like_DNA-bd_sf"/>
</dbReference>
<dbReference type="InterPro" id="IPR036390">
    <property type="entry name" value="WH_DNA-bd_sf"/>
</dbReference>
<dbReference type="NCBIfam" id="TIGR02787">
    <property type="entry name" value="codY_Gpos"/>
    <property type="match status" value="1"/>
</dbReference>
<dbReference type="NCBIfam" id="NF003170">
    <property type="entry name" value="PRK04158.1"/>
    <property type="match status" value="1"/>
</dbReference>
<dbReference type="PANTHER" id="PTHR40062:SF1">
    <property type="entry name" value="GLOBAL TRANSCRIPTIONAL REGULATOR CODY"/>
    <property type="match status" value="1"/>
</dbReference>
<dbReference type="PANTHER" id="PTHR40062">
    <property type="entry name" value="GTP-SENSING TRANSCRIPTIONAL PLEIOTROPIC REPRESSOR CODY"/>
    <property type="match status" value="1"/>
</dbReference>
<dbReference type="Pfam" id="PF06018">
    <property type="entry name" value="CodY"/>
    <property type="match status" value="1"/>
</dbReference>
<dbReference type="Pfam" id="PF08222">
    <property type="entry name" value="HTH_CodY"/>
    <property type="match status" value="1"/>
</dbReference>
<dbReference type="PIRSF" id="PIRSF011572">
    <property type="entry name" value="GTP_sensing_CodY"/>
    <property type="match status" value="1"/>
</dbReference>
<dbReference type="SUPFAM" id="SSF46785">
    <property type="entry name" value="Winged helix' DNA-binding domain"/>
    <property type="match status" value="1"/>
</dbReference>
<organism>
    <name type="scientific">Listeria monocytogenes serotype 4b (strain CLIP80459)</name>
    <dbReference type="NCBI Taxonomy" id="568819"/>
    <lineage>
        <taxon>Bacteria</taxon>
        <taxon>Bacillati</taxon>
        <taxon>Bacillota</taxon>
        <taxon>Bacilli</taxon>
        <taxon>Bacillales</taxon>
        <taxon>Listeriaceae</taxon>
        <taxon>Listeria</taxon>
    </lineage>
</organism>
<proteinExistence type="inferred from homology"/>
<keyword id="KW-0963">Cytoplasm</keyword>
<keyword id="KW-0238">DNA-binding</keyword>
<keyword id="KW-0678">Repressor</keyword>
<keyword id="KW-0804">Transcription</keyword>
<keyword id="KW-0805">Transcription regulation</keyword>
<gene>
    <name evidence="1" type="primary">codY</name>
    <name type="ordered locus">Lm4b_01290</name>
</gene>
<reference key="1">
    <citation type="journal article" date="2012" name="BMC Genomics">
        <title>Comparative genomics and transcriptomics of lineages I, II, and III strains of Listeria monocytogenes.</title>
        <authorList>
            <person name="Hain T."/>
            <person name="Ghai R."/>
            <person name="Billion A."/>
            <person name="Kuenne C.T."/>
            <person name="Steinweg C."/>
            <person name="Izar B."/>
            <person name="Mohamed W."/>
            <person name="Mraheil M."/>
            <person name="Domann E."/>
            <person name="Schaffrath S."/>
            <person name="Karst U."/>
            <person name="Goesmann A."/>
            <person name="Oehm S."/>
            <person name="Puhler A."/>
            <person name="Merkl R."/>
            <person name="Vorwerk S."/>
            <person name="Glaser P."/>
            <person name="Garrido P."/>
            <person name="Rusniok C."/>
            <person name="Buchrieser C."/>
            <person name="Goebel W."/>
            <person name="Chakraborty T."/>
        </authorList>
    </citation>
    <scope>NUCLEOTIDE SEQUENCE [LARGE SCALE GENOMIC DNA]</scope>
    <source>
        <strain>CLIP80459</strain>
    </source>
</reference>
<feature type="chain" id="PRO_1000212287" description="Global transcriptional regulator CodY">
    <location>
        <begin position="1"/>
        <end position="259"/>
    </location>
</feature>
<feature type="DNA-binding region" description="H-T-H motif" evidence="1">
    <location>
        <begin position="203"/>
        <end position="222"/>
    </location>
</feature>
<feature type="region of interest" description="GAF domain" evidence="1">
    <location>
        <begin position="1"/>
        <end position="155"/>
    </location>
</feature>
<name>CODY_LISMC</name>
<sequence length="259" mass="28745">MTLLEKTRKINAMLQNAAGKTVNFKEMADTLTDVIEANTYIVSRKGKLLGYSEALPIENDRMKQMLTERQFPEEYTQSLFNVGETSSNLEVSSQYTAFPIENSELFTKGLTTIVPIVGGGERLGTLILSRLESNFTDDDLLLAEYGGTVVGMEILHEKAEEIEEEARSRAVVQMAISSLSYSELEAIEHIFDELNGKEGLLVASKIADRVGITRSVIVNALRKLESAGVIDSRSLGMKGTFIRVLNDKFLVELEKLKNN</sequence>
<comment type="function">
    <text evidence="1">DNA-binding global transcriptional regulator which is involved in the adaptive response to starvation and acts by directly or indirectly controlling the expression of numerous genes in response to nutrient availability. During rapid exponential growth, CodY is highly active and represses genes whose products allow adaptation to nutrient depletion.</text>
</comment>
<comment type="subcellular location">
    <subcellularLocation>
        <location evidence="1">Cytoplasm</location>
    </subcellularLocation>
</comment>
<comment type="similarity">
    <text evidence="1">Belongs to the CodY family.</text>
</comment>
<protein>
    <recommendedName>
        <fullName evidence="1">Global transcriptional regulator CodY</fullName>
    </recommendedName>
</protein>
<evidence type="ECO:0000255" key="1">
    <source>
        <dbReference type="HAMAP-Rule" id="MF_00621"/>
    </source>
</evidence>
<accession>C1L2I8</accession>